<evidence type="ECO:0000250" key="1">
    <source>
        <dbReference type="UniProtKB" id="Q8N4S0"/>
    </source>
</evidence>
<evidence type="ECO:0000255" key="2"/>
<evidence type="ECO:0000256" key="3">
    <source>
        <dbReference type="SAM" id="MobiDB-lite"/>
    </source>
</evidence>
<evidence type="ECO:0007744" key="4">
    <source>
    </source>
</evidence>
<organism>
    <name type="scientific">Rattus norvegicus</name>
    <name type="common">Rat</name>
    <dbReference type="NCBI Taxonomy" id="10116"/>
    <lineage>
        <taxon>Eukaryota</taxon>
        <taxon>Metazoa</taxon>
        <taxon>Chordata</taxon>
        <taxon>Craniata</taxon>
        <taxon>Vertebrata</taxon>
        <taxon>Euteleostomi</taxon>
        <taxon>Mammalia</taxon>
        <taxon>Eutheria</taxon>
        <taxon>Euarchontoglires</taxon>
        <taxon>Glires</taxon>
        <taxon>Rodentia</taxon>
        <taxon>Myomorpha</taxon>
        <taxon>Muroidea</taxon>
        <taxon>Muridae</taxon>
        <taxon>Murinae</taxon>
        <taxon>Rattus</taxon>
    </lineage>
</organism>
<sequence>MVHARRHETRKNSKTQVPEQKSRVDWRRTKRSVSQLFDSDEELDSDEEIGSDEDLDGGESIDSDGKLDISKDSGINEIPEKETELNLIKVESERSNSKCHMNTSSSSADEEEMNKTKHNDLPDDEAHPGQAEGHHNKLTGQVLEEDVEDECIKPGKRKRLSSVMYDSDESDDSDILVRKASAKHPRRVVEDECSSLEMERETPEKSPAARKREYHQKLQELCERSRQKQRHNSGRNCESSEKDSCSSTDEDEDDDDYGDAENEDDYMIDDFVVGDEEADEENKNQGENLTTSQLKLVKQNSLYSFSDHYTHFERVVKALLINAFDGSFLETLYAGKRKKSYAQDMLTSLHYLDDRFIQPRLESLVSRSRWREQYKERVESYSDLSIHWKSPENCGCQACGLHRYCKFSVRLSGKLYNTRTMETDDFMSRDKQVFIVGRICAERTKIYHKLKHFKFKLYQDCCSIAYTKEVGDEQVKDTVKRLFCQLKKSGWIRKKHGQLEEYLNSADYFQDEKFKL</sequence>
<keyword id="KW-0175">Coiled coil</keyword>
<keyword id="KW-0597">Phosphoprotein</keyword>
<keyword id="KW-1185">Reference proteome</keyword>
<protein>
    <recommendedName>
        <fullName>Coiled-coil domain-containing protein 82</fullName>
    </recommendedName>
</protein>
<gene>
    <name type="primary">Ccdc82</name>
</gene>
<reference key="1">
    <citation type="journal article" date="2004" name="Genome Res.">
        <title>The status, quality, and expansion of the NIH full-length cDNA project: the Mammalian Gene Collection (MGC).</title>
        <authorList>
            <consortium name="The MGC Project Team"/>
        </authorList>
    </citation>
    <scope>NUCLEOTIDE SEQUENCE [LARGE SCALE MRNA]</scope>
    <source>
        <tissue>Kidney</tissue>
    </source>
</reference>
<reference key="2">
    <citation type="journal article" date="2012" name="Nat. Commun.">
        <title>Quantitative maps of protein phosphorylation sites across 14 different rat organs and tissues.</title>
        <authorList>
            <person name="Lundby A."/>
            <person name="Secher A."/>
            <person name="Lage K."/>
            <person name="Nordsborg N.B."/>
            <person name="Dmytriyev A."/>
            <person name="Lundby C."/>
            <person name="Olsen J.V."/>
        </authorList>
    </citation>
    <scope>PHOSPHORYLATION [LARGE SCALE ANALYSIS] AT SER-170</scope>
    <scope>IDENTIFICATION BY MASS SPECTROMETRY [LARGE SCALE ANALYSIS]</scope>
</reference>
<name>CCD82_RAT</name>
<dbReference type="EMBL" id="BC081989">
    <property type="protein sequence ID" value="AAH81989.1"/>
    <property type="molecule type" value="mRNA"/>
</dbReference>
<dbReference type="RefSeq" id="NP_001007661.1">
    <property type="nucleotide sequence ID" value="NM_001007660.1"/>
</dbReference>
<dbReference type="RefSeq" id="XP_006242581.1">
    <property type="nucleotide sequence ID" value="XM_006242519.5"/>
</dbReference>
<dbReference type="BioGRID" id="256548">
    <property type="interactions" value="1"/>
</dbReference>
<dbReference type="FunCoup" id="Q66H73">
    <property type="interactions" value="2601"/>
</dbReference>
<dbReference type="STRING" id="10116.ENSRNOP00000074185"/>
<dbReference type="CarbonylDB" id="Q66H73"/>
<dbReference type="iPTMnet" id="Q66H73"/>
<dbReference type="PhosphoSitePlus" id="Q66H73"/>
<dbReference type="PaxDb" id="10116-ENSRNOP00000037632"/>
<dbReference type="Ensembl" id="ENSRNOT00000037457.5">
    <property type="protein sequence ID" value="ENSRNOP00000037632.3"/>
    <property type="gene ID" value="ENSRNOG00000005713.6"/>
</dbReference>
<dbReference type="GeneID" id="300359"/>
<dbReference type="KEGG" id="rno:300359"/>
<dbReference type="UCSC" id="RGD:1359666">
    <property type="organism name" value="rat"/>
</dbReference>
<dbReference type="AGR" id="RGD:1359666"/>
<dbReference type="CTD" id="79780"/>
<dbReference type="RGD" id="1359666">
    <property type="gene designation" value="Ccdc82"/>
</dbReference>
<dbReference type="eggNOG" id="KOG4805">
    <property type="taxonomic scope" value="Eukaryota"/>
</dbReference>
<dbReference type="GeneTree" id="ENSGT00390000004986"/>
<dbReference type="InParanoid" id="Q66H73"/>
<dbReference type="OMA" id="HYVHFKR"/>
<dbReference type="OrthoDB" id="80132at9989"/>
<dbReference type="PhylomeDB" id="Q66H73"/>
<dbReference type="TreeFam" id="TF328837"/>
<dbReference type="PRO" id="PR:Q66H73"/>
<dbReference type="Proteomes" id="UP000002494">
    <property type="component" value="Chromosome 8"/>
</dbReference>
<dbReference type="Bgee" id="ENSRNOG00000005713">
    <property type="expression patterns" value="Expressed in thymus and 19 other cell types or tissues"/>
</dbReference>
<dbReference type="GO" id="GO:0005634">
    <property type="term" value="C:nucleus"/>
    <property type="evidence" value="ECO:0000318"/>
    <property type="project" value="GO_Central"/>
</dbReference>
<dbReference type="InterPro" id="IPR025244">
    <property type="entry name" value="CCDC82"/>
</dbReference>
<dbReference type="InterPro" id="IPR025451">
    <property type="entry name" value="DUF4211"/>
</dbReference>
<dbReference type="PANTHER" id="PTHR14689:SF0">
    <property type="entry name" value="COILED-COIL DOMAIN-CONTAINING PROTEIN 82"/>
    <property type="match status" value="1"/>
</dbReference>
<dbReference type="PANTHER" id="PTHR14689">
    <property type="entry name" value="PHORBOL-ESTER_DAG-TYPE DOMAIN-CONTAINING PROTEIN"/>
    <property type="match status" value="1"/>
</dbReference>
<dbReference type="Pfam" id="PF13846">
    <property type="entry name" value="DUF4196"/>
    <property type="match status" value="1"/>
</dbReference>
<dbReference type="Pfam" id="PF13926">
    <property type="entry name" value="DUF4211"/>
    <property type="match status" value="1"/>
</dbReference>
<proteinExistence type="evidence at protein level"/>
<accession>Q66H73</accession>
<feature type="chain" id="PRO_0000234290" description="Coiled-coil domain-containing protein 82">
    <location>
        <begin position="1"/>
        <end position="516"/>
    </location>
</feature>
<feature type="region of interest" description="Disordered" evidence="3">
    <location>
        <begin position="1"/>
        <end position="265"/>
    </location>
</feature>
<feature type="coiled-coil region" evidence="2">
    <location>
        <begin position="204"/>
        <end position="232"/>
    </location>
</feature>
<feature type="compositionally biased region" description="Basic residues" evidence="3">
    <location>
        <begin position="1"/>
        <end position="13"/>
    </location>
</feature>
<feature type="compositionally biased region" description="Acidic residues" evidence="3">
    <location>
        <begin position="38"/>
        <end position="62"/>
    </location>
</feature>
<feature type="compositionally biased region" description="Basic and acidic residues" evidence="3">
    <location>
        <begin position="78"/>
        <end position="96"/>
    </location>
</feature>
<feature type="compositionally biased region" description="Polar residues" evidence="3">
    <location>
        <begin position="98"/>
        <end position="107"/>
    </location>
</feature>
<feature type="compositionally biased region" description="Basic and acidic residues" evidence="3">
    <location>
        <begin position="113"/>
        <end position="135"/>
    </location>
</feature>
<feature type="compositionally biased region" description="Basic and acidic residues" evidence="3">
    <location>
        <begin position="215"/>
        <end position="226"/>
    </location>
</feature>
<feature type="compositionally biased region" description="Acidic residues" evidence="3">
    <location>
        <begin position="248"/>
        <end position="265"/>
    </location>
</feature>
<feature type="modified residue" description="Phosphoserine" evidence="4">
    <location>
        <position position="170"/>
    </location>
</feature>
<feature type="modified residue" description="Phosphoserine" evidence="1">
    <location>
        <position position="194"/>
    </location>
</feature>
<feature type="modified residue" description="Phosphothreonine" evidence="1">
    <location>
        <position position="202"/>
    </location>
</feature>
<feature type="modified residue" description="Phosphoserine" evidence="1">
    <location>
        <position position="301"/>
    </location>
</feature>